<organism>
    <name type="scientific">Bacillus cereus (strain AH187)</name>
    <dbReference type="NCBI Taxonomy" id="405534"/>
    <lineage>
        <taxon>Bacteria</taxon>
        <taxon>Bacillati</taxon>
        <taxon>Bacillota</taxon>
        <taxon>Bacilli</taxon>
        <taxon>Bacillales</taxon>
        <taxon>Bacillaceae</taxon>
        <taxon>Bacillus</taxon>
        <taxon>Bacillus cereus group</taxon>
    </lineage>
</organism>
<protein>
    <recommendedName>
        <fullName evidence="1">Septation ring formation regulator EzrA</fullName>
    </recommendedName>
</protein>
<sequence length="570" mass="66525">MDSILTIVIIVVSSILVLLMIELVIRNRSYKDIEALEQWKQEIKDKPVADELKRVKDLNMTGQTEELFGKWREEWDEIVSTTIPKAEKDLAQARKFASQFSFRKAKHAMNESISGLDDADNRITDILNELQQLLESHEKNSSEIEGLRDTYRSMKKSVLAHRHMYGAAEQKIEEMLDAESEKFKTFEEATNNGDYLKAREIVISLEEGLADLEIIIHQIPDLLVECQATLPVQLEDLLHGHNDMVRQGYVLEYLEIPKEVRDMKKQLQICLMDIQELHITEAAEKVENLKTSLDSFYDQLEQEVHARHYVEQKTLSVYEDLEEIRIETIETKAETQLVKQSYQLQDKDIESQKVIEKQMHILMKRFEMLQLRVAEQDIAFSIIREELEEIYEQCETLKVLHAEYKEMLQTMRKEEFEAREKLQEMRNTIFETKRFMQKSNLPGLPESIMEDLKRGQMAMQAVYEQLEVKPLNMNAVNSSLEEAYTTVNGVAEMTEELIGQAYLVEKLIQYGNRYRSHDENLADSLNYAEKLFREYQYDAALEQAASVLEQLEPGVVQKIAEYVDNEQTLS</sequence>
<proteinExistence type="inferred from homology"/>
<gene>
    <name evidence="1" type="primary">ezrA</name>
    <name type="ordered locus">BCAH187_A4784</name>
</gene>
<feature type="chain" id="PRO_1000132705" description="Septation ring formation regulator EzrA">
    <location>
        <begin position="1"/>
        <end position="570"/>
    </location>
</feature>
<feature type="topological domain" description="Extracellular" evidence="1">
    <location>
        <begin position="1"/>
        <end position="6"/>
    </location>
</feature>
<feature type="transmembrane region" description="Helical" evidence="1">
    <location>
        <begin position="7"/>
        <end position="25"/>
    </location>
</feature>
<feature type="topological domain" description="Cytoplasmic" evidence="1">
    <location>
        <begin position="26"/>
        <end position="570"/>
    </location>
</feature>
<feature type="coiled-coil region" evidence="1">
    <location>
        <begin position="115"/>
        <end position="149"/>
    </location>
</feature>
<feature type="coiled-coil region" evidence="1">
    <location>
        <begin position="275"/>
        <end position="303"/>
    </location>
</feature>
<feature type="coiled-coil region" evidence="1">
    <location>
        <begin position="355"/>
        <end position="429"/>
    </location>
</feature>
<reference key="1">
    <citation type="submission" date="2008-10" db="EMBL/GenBank/DDBJ databases">
        <title>Genome sequence of Bacillus cereus AH187.</title>
        <authorList>
            <person name="Dodson R.J."/>
            <person name="Durkin A.S."/>
            <person name="Rosovitz M.J."/>
            <person name="Rasko D.A."/>
            <person name="Kolsto A.B."/>
            <person name="Okstad O.A."/>
            <person name="Ravel J."/>
            <person name="Sutton G."/>
        </authorList>
    </citation>
    <scope>NUCLEOTIDE SEQUENCE [LARGE SCALE GENOMIC DNA]</scope>
    <source>
        <strain>AH187</strain>
    </source>
</reference>
<comment type="function">
    <text evidence="1">Negative regulator of FtsZ ring formation; modulates the frequency and position of FtsZ ring formation. Inhibits FtsZ ring formation at polar sites. Interacts either with FtsZ or with one of its binding partners to promote depolymerization.</text>
</comment>
<comment type="subcellular location">
    <subcellularLocation>
        <location evidence="1">Cell membrane</location>
        <topology evidence="1">Single-pass membrane protein</topology>
    </subcellularLocation>
    <text evidence="1">Colocalized with FtsZ to the nascent septal site.</text>
</comment>
<comment type="similarity">
    <text evidence="1">Belongs to the EzrA family.</text>
</comment>
<dbReference type="EMBL" id="CP001177">
    <property type="protein sequence ID" value="ACJ79197.1"/>
    <property type="molecule type" value="Genomic_DNA"/>
</dbReference>
<dbReference type="SMR" id="B7HSI6"/>
<dbReference type="KEGG" id="bcr:BCAH187_A4784"/>
<dbReference type="HOGENOM" id="CLU_034079_1_0_9"/>
<dbReference type="Proteomes" id="UP000002214">
    <property type="component" value="Chromosome"/>
</dbReference>
<dbReference type="GO" id="GO:0005886">
    <property type="term" value="C:plasma membrane"/>
    <property type="evidence" value="ECO:0007669"/>
    <property type="project" value="UniProtKB-SubCell"/>
</dbReference>
<dbReference type="GO" id="GO:0005940">
    <property type="term" value="C:septin ring"/>
    <property type="evidence" value="ECO:0007669"/>
    <property type="project" value="InterPro"/>
</dbReference>
<dbReference type="GO" id="GO:0000917">
    <property type="term" value="P:division septum assembly"/>
    <property type="evidence" value="ECO:0007669"/>
    <property type="project" value="UniProtKB-KW"/>
</dbReference>
<dbReference type="GO" id="GO:0000921">
    <property type="term" value="P:septin ring assembly"/>
    <property type="evidence" value="ECO:0007669"/>
    <property type="project" value="InterPro"/>
</dbReference>
<dbReference type="HAMAP" id="MF_00728">
    <property type="entry name" value="EzrA"/>
    <property type="match status" value="1"/>
</dbReference>
<dbReference type="InterPro" id="IPR010379">
    <property type="entry name" value="EzrA"/>
</dbReference>
<dbReference type="NCBIfam" id="NF003411">
    <property type="entry name" value="PRK04778.1-5"/>
    <property type="match status" value="1"/>
</dbReference>
<dbReference type="NCBIfam" id="NF003413">
    <property type="entry name" value="PRK04778.1-7"/>
    <property type="match status" value="1"/>
</dbReference>
<dbReference type="Pfam" id="PF06160">
    <property type="entry name" value="EzrA"/>
    <property type="match status" value="1"/>
</dbReference>
<keyword id="KW-0131">Cell cycle</keyword>
<keyword id="KW-0132">Cell division</keyword>
<keyword id="KW-1003">Cell membrane</keyword>
<keyword id="KW-0175">Coiled coil</keyword>
<keyword id="KW-0472">Membrane</keyword>
<keyword id="KW-0717">Septation</keyword>
<keyword id="KW-0812">Transmembrane</keyword>
<keyword id="KW-1133">Transmembrane helix</keyword>
<evidence type="ECO:0000255" key="1">
    <source>
        <dbReference type="HAMAP-Rule" id="MF_00728"/>
    </source>
</evidence>
<accession>B7HSI6</accession>
<name>EZRA_BACC7</name>